<accession>Q8N6P7</accession>
<accession>A8K839</accession>
<accession>B2R9Y9</accession>
<accession>Q9HB22</accession>
<evidence type="ECO:0000250" key="1">
    <source>
        <dbReference type="UniProtKB" id="Q80XZ4"/>
    </source>
</evidence>
<evidence type="ECO:0000255" key="2"/>
<evidence type="ECO:0000255" key="3">
    <source>
        <dbReference type="PROSITE-ProRule" id="PRU00316"/>
    </source>
</evidence>
<evidence type="ECO:0000256" key="4">
    <source>
        <dbReference type="SAM" id="MobiDB-lite"/>
    </source>
</evidence>
<evidence type="ECO:0000269" key="5">
    <source>
    </source>
</evidence>
<evidence type="ECO:0000269" key="6">
    <source>
    </source>
</evidence>
<evidence type="ECO:0000269" key="7">
    <source>
    </source>
</evidence>
<evidence type="ECO:0000269" key="8">
    <source>
    </source>
</evidence>
<evidence type="ECO:0000269" key="9">
    <source>
    </source>
</evidence>
<evidence type="ECO:0000269" key="10">
    <source>
    </source>
</evidence>
<evidence type="ECO:0000269" key="11">
    <source>
    </source>
</evidence>
<evidence type="ECO:0000269" key="12">
    <source>
    </source>
</evidence>
<evidence type="ECO:0000269" key="13">
    <source>
    </source>
</evidence>
<evidence type="ECO:0000269" key="14">
    <source>
    </source>
</evidence>
<evidence type="ECO:0000269" key="15">
    <source>
    </source>
</evidence>
<evidence type="ECO:0000269" key="16">
    <source>
    </source>
</evidence>
<evidence type="ECO:0000269" key="17">
    <source>
    </source>
</evidence>
<evidence type="ECO:0000269" key="18">
    <source>
    </source>
</evidence>
<evidence type="ECO:0000269" key="19">
    <source>
    </source>
</evidence>
<evidence type="ECO:0000269" key="20">
    <source>
    </source>
</evidence>
<evidence type="ECO:0000305" key="21"/>
<evidence type="ECO:0000305" key="22">
    <source>
    </source>
</evidence>
<evidence type="ECO:0007829" key="23">
    <source>
        <dbReference type="PDB" id="3DLQ"/>
    </source>
</evidence>
<evidence type="ECO:0007829" key="24">
    <source>
        <dbReference type="PDB" id="6DF3"/>
    </source>
</evidence>
<feature type="signal peptide" evidence="2">
    <location>
        <begin position="1"/>
        <end position="15"/>
    </location>
</feature>
<feature type="chain" id="PRO_0000324320" description="Interleukin-22 receptor subunit alpha-1">
    <location>
        <begin position="16"/>
        <end position="574"/>
    </location>
</feature>
<feature type="topological domain" description="Extracellular" evidence="2">
    <location>
        <begin position="16"/>
        <end position="228"/>
    </location>
</feature>
<feature type="transmembrane region" description="Helical" evidence="2">
    <location>
        <begin position="229"/>
        <end position="249"/>
    </location>
</feature>
<feature type="topological domain" description="Cytoplasmic" evidence="2">
    <location>
        <begin position="250"/>
        <end position="574"/>
    </location>
</feature>
<feature type="domain" description="Fibronectin type-III 1" evidence="3">
    <location>
        <begin position="17"/>
        <end position="124"/>
    </location>
</feature>
<feature type="domain" description="Fibronectin type-III 2" evidence="3">
    <location>
        <begin position="141"/>
        <end position="221"/>
    </location>
</feature>
<feature type="region of interest" description="Disordered" evidence="4">
    <location>
        <begin position="388"/>
        <end position="440"/>
    </location>
</feature>
<feature type="region of interest" description="Disordered" evidence="4">
    <location>
        <begin position="454"/>
        <end position="489"/>
    </location>
</feature>
<feature type="region of interest" description="Disordered" evidence="4">
    <location>
        <begin position="507"/>
        <end position="560"/>
    </location>
</feature>
<feature type="modified residue" description="Phosphoserine" evidence="1">
    <location>
        <position position="410"/>
    </location>
</feature>
<feature type="modified residue" description="Phosphoserine" evidence="1">
    <location>
        <position position="414"/>
    </location>
</feature>
<feature type="glycosylation site" description="N-linked (GlcNAc...) asparagine" evidence="2">
    <location>
        <position position="80"/>
    </location>
</feature>
<feature type="glycosylation site" description="N-linked (GlcNAc...) asparagine" evidence="2">
    <location>
        <position position="172"/>
    </location>
</feature>
<feature type="disulfide bond" evidence="19">
    <location>
        <begin position="71"/>
        <end position="79"/>
    </location>
</feature>
<feature type="disulfide bond" evidence="19">
    <location>
        <begin position="128"/>
        <end position="217"/>
    </location>
</feature>
<feature type="sequence variant" id="VAR_039699" description="In dbSNP:rs34900099.">
    <original>S</original>
    <variation>P</variation>
    <location>
        <position position="130"/>
    </location>
</feature>
<feature type="sequence variant" id="VAR_039700" description="In dbSNP:rs16829204.">
    <original>V</original>
    <variation>I</variation>
    <location>
        <position position="205"/>
    </location>
</feature>
<feature type="sequence variant" id="VAR_039701" description="In dbSNP:rs34379702.">
    <original>A</original>
    <variation>S</variation>
    <location>
        <position position="209"/>
    </location>
</feature>
<feature type="sequence variant" id="VAR_039702" description="In dbSNP:rs34782294.">
    <original>L</original>
    <variation>P</variation>
    <location>
        <position position="222"/>
    </location>
</feature>
<feature type="sequence variant" id="VAR_039703" description="In dbSNP:rs35401673.">
    <original>M</original>
    <variation>V</variation>
    <location>
        <position position="407"/>
    </location>
</feature>
<feature type="sequence variant" id="VAR_039704" description="In dbSNP:rs3795299." evidence="5 12">
    <original>R</original>
    <variation>G</variation>
    <location>
        <position position="518"/>
    </location>
</feature>
<feature type="mutagenesis site" description="Strongly reduced response to IL22." evidence="19">
    <original>K</original>
    <variation>A</variation>
    <location>
        <position position="58"/>
    </location>
</feature>
<feature type="mutagenesis site" description="Loss of response to IL22." evidence="19">
    <original>Y</original>
    <variation>A</variation>
    <variation>R</variation>
    <location>
        <position position="60"/>
    </location>
</feature>
<feature type="sequence conflict" description="In Ref. 2; BAF84893." evidence="21" ref="2">
    <original>Q</original>
    <variation>R</variation>
    <location>
        <position position="117"/>
    </location>
</feature>
<feature type="helix" evidence="23">
    <location>
        <begin position="21"/>
        <end position="23"/>
    </location>
</feature>
<feature type="strand" evidence="23">
    <location>
        <begin position="25"/>
        <end position="33"/>
    </location>
</feature>
<feature type="strand" evidence="23">
    <location>
        <begin position="36"/>
        <end position="43"/>
    </location>
</feature>
<feature type="strand" evidence="23">
    <location>
        <begin position="49"/>
        <end position="59"/>
    </location>
</feature>
<feature type="strand" evidence="23">
    <location>
        <begin position="72"/>
        <end position="80"/>
    </location>
</feature>
<feature type="helix" evidence="23">
    <location>
        <begin position="83"/>
        <end position="85"/>
    </location>
</feature>
<feature type="strand" evidence="23">
    <location>
        <begin position="92"/>
        <end position="100"/>
    </location>
</feature>
<feature type="strand" evidence="23">
    <location>
        <begin position="105"/>
        <end position="109"/>
    </location>
</feature>
<feature type="helix" evidence="23">
    <location>
        <begin position="115"/>
        <end position="118"/>
    </location>
</feature>
<feature type="strand" evidence="23">
    <location>
        <begin position="126"/>
        <end position="130"/>
    </location>
</feature>
<feature type="strand" evidence="23">
    <location>
        <begin position="132"/>
        <end position="139"/>
    </location>
</feature>
<feature type="strand" evidence="24">
    <location>
        <begin position="143"/>
        <end position="147"/>
    </location>
</feature>
<feature type="strand" evidence="24">
    <location>
        <begin position="149"/>
        <end position="151"/>
    </location>
</feature>
<feature type="strand" evidence="24">
    <location>
        <begin position="153"/>
        <end position="155"/>
    </location>
</feature>
<feature type="helix" evidence="23">
    <location>
        <begin position="156"/>
        <end position="159"/>
    </location>
</feature>
<feature type="strand" evidence="23">
    <location>
        <begin position="164"/>
        <end position="170"/>
    </location>
</feature>
<feature type="turn" evidence="24">
    <location>
        <begin position="172"/>
        <end position="174"/>
    </location>
</feature>
<feature type="strand" evidence="23">
    <location>
        <begin position="177"/>
        <end position="190"/>
    </location>
</feature>
<feature type="strand" evidence="23">
    <location>
        <begin position="196"/>
        <end position="205"/>
    </location>
</feature>
<feature type="helix" evidence="23">
    <location>
        <begin position="206"/>
        <end position="208"/>
    </location>
</feature>
<feature type="strand" evidence="23">
    <location>
        <begin position="215"/>
        <end position="220"/>
    </location>
</feature>
<protein>
    <recommendedName>
        <fullName>Interleukin-22 receptor subunit alpha-1</fullName>
        <shortName>IL-22 receptor subunit alpha-1</shortName>
        <shortName>IL-22R-alpha-1</shortName>
        <shortName>IL-22RA1</shortName>
    </recommendedName>
    <alternativeName>
        <fullName>Cytokine receptor class-II member 9</fullName>
    </alternativeName>
    <alternativeName>
        <fullName>Cytokine receptor family 2 member 9</fullName>
        <shortName>CRF2-9</shortName>
    </alternativeName>
    <alternativeName>
        <fullName>ZcytoR11</fullName>
    </alternativeName>
</protein>
<comment type="function">
    <text evidence="6 7 8 9 11 15">Component of the receptor for IL20, IL22 and IL24. Component of IL22 receptor formed by IL22RA1 and IL10RB enabling IL22 signaling via JAK/STAT pathways. IL22 also induces activation of MAPK1/MAPK3 and Akt kinases pathways. Component of one of the receptor for IL20 and IL24 formed by IL22RA1 and IL20RB also signaling through STATs activation. Mediates IL24 antiangiogenic activity as well as IL24 inhibitory effect on endothelial cell tube formation and differentiation.</text>
</comment>
<comment type="subunit">
    <text evidence="6 13 19 20">Heterodimer with IL10RB and with IL20RB. IL22 binding to heterodimer is greater than binding to IL22RA1 alone (PubMed:11035029, PubMed:15120653, PubMed:18675809). Interacts with FBXW12; the interaction promotes ubiquitination of IL22RA1 (PubMed:26171402).</text>
</comment>
<comment type="interaction">
    <interactant intactId="EBI-3940749">
        <id>Q8N6P7</id>
    </interactant>
    <interactant intactId="EBI-11175900">
        <id>Q08334</id>
        <label>IL10RB</label>
    </interactant>
    <organismsDiffer>false</organismsDiffer>
    <experiments>5</experiments>
</comment>
<comment type="interaction">
    <interactant intactId="EBI-3940749">
        <id>Q8N6P7</id>
    </interactant>
    <interactant intactId="EBI-8040250">
        <id>Q9GZX6</id>
        <label>IL22</label>
    </interactant>
    <organismsDiffer>false</organismsDiffer>
    <experiments>9</experiments>
</comment>
<comment type="interaction">
    <interactant intactId="EBI-3940749">
        <id>Q8N6P7</id>
    </interactant>
    <interactant intactId="EBI-11315863">
        <id>PRO_0000015383</id>
        <label>IL22</label>
        <dbReference type="UniProtKB" id="Q9GZX6"/>
    </interactant>
    <organismsDiffer>false</organismsDiffer>
    <experiments>4</experiments>
</comment>
<comment type="interaction">
    <interactant intactId="EBI-3940749">
        <id>Q8N6P7</id>
    </interactant>
    <interactant intactId="EBI-1055254">
        <id>Q8WXH2</id>
        <label>JPH3</label>
    </interactant>
    <organismsDiffer>false</organismsDiffer>
    <experiments>3</experiments>
</comment>
<comment type="subcellular location">
    <subcellularLocation>
        <location evidence="22">Cell membrane</location>
        <topology evidence="2">Single-pass type I membrane protein</topology>
    </subcellularLocation>
</comment>
<comment type="tissue specificity">
    <text evidence="10 14 16 17 18">Expressed in colon, liver, lung, pancreas and kidney. No expression in immune cells such as monocytes, T-cells, and NK-cells. Expressed in keratinocytes of normal skin as well as in psoriatic skin lesion. Detected in normal blood brain barrier endothelial cells as well as in multiple sclerosis lesions; Strongly expressed on central nervous system vessels within infiltrated multiple sclerosis lesions. Overexpressed in synovial fluid cells from rheumatoid arthritis and spondyloarthropathy patients.</text>
</comment>
<comment type="induction">
    <text evidence="14">By IFNG/IFN-gamma in keratinocytes.</text>
</comment>
<comment type="PTM">
    <text evidence="20">Ubiquitinated.</text>
</comment>
<comment type="miscellaneous">
    <text>Failure of medical and surgical therapy in Chronic rhinosinusitis with nasal polyps is associated with decreased expression of IL22RA1.</text>
</comment>
<comment type="similarity">
    <text evidence="21">Belongs to the type II cytokine receptor family.</text>
</comment>
<comment type="online information" name="Atlas of Genetics and Cytogenetics in Oncology and Haematology">
    <link uri="https://atlasgeneticsoncology.org/gene/44568/IL22RA1"/>
</comment>
<name>I22R1_HUMAN</name>
<proteinExistence type="evidence at protein level"/>
<reference key="1">
    <citation type="journal article" date="2000" name="J. Biol. Chem.">
        <title>Interleukin (IL)-22, a novel human cytokine that signals through the interferon receptor-related proteins CRF2-4 and IL-22R.</title>
        <authorList>
            <person name="Xie M.-H."/>
            <person name="Aggarwal S."/>
            <person name="Ho W.-H."/>
            <person name="Foster J."/>
            <person name="Zhang Z."/>
            <person name="Stinson J."/>
            <person name="Wood W.I."/>
            <person name="Goddard A.D."/>
            <person name="Gurney A.L."/>
        </authorList>
    </citation>
    <scope>NUCLEOTIDE SEQUENCE [MRNA]</scope>
    <scope>VARIANT GLY-518</scope>
</reference>
<reference key="2">
    <citation type="journal article" date="2004" name="Nat. Genet.">
        <title>Complete sequencing and characterization of 21,243 full-length human cDNAs.</title>
        <authorList>
            <person name="Ota T."/>
            <person name="Suzuki Y."/>
            <person name="Nishikawa T."/>
            <person name="Otsuki T."/>
            <person name="Sugiyama T."/>
            <person name="Irie R."/>
            <person name="Wakamatsu A."/>
            <person name="Hayashi K."/>
            <person name="Sato H."/>
            <person name="Nagai K."/>
            <person name="Kimura K."/>
            <person name="Makita H."/>
            <person name="Sekine M."/>
            <person name="Obayashi M."/>
            <person name="Nishi T."/>
            <person name="Shibahara T."/>
            <person name="Tanaka T."/>
            <person name="Ishii S."/>
            <person name="Yamamoto J."/>
            <person name="Saito K."/>
            <person name="Kawai Y."/>
            <person name="Isono Y."/>
            <person name="Nakamura Y."/>
            <person name="Nagahari K."/>
            <person name="Murakami K."/>
            <person name="Yasuda T."/>
            <person name="Iwayanagi T."/>
            <person name="Wagatsuma M."/>
            <person name="Shiratori A."/>
            <person name="Sudo H."/>
            <person name="Hosoiri T."/>
            <person name="Kaku Y."/>
            <person name="Kodaira H."/>
            <person name="Kondo H."/>
            <person name="Sugawara M."/>
            <person name="Takahashi M."/>
            <person name="Kanda K."/>
            <person name="Yokoi T."/>
            <person name="Furuya T."/>
            <person name="Kikkawa E."/>
            <person name="Omura Y."/>
            <person name="Abe K."/>
            <person name="Kamihara K."/>
            <person name="Katsuta N."/>
            <person name="Sato K."/>
            <person name="Tanikawa M."/>
            <person name="Yamazaki M."/>
            <person name="Ninomiya K."/>
            <person name="Ishibashi T."/>
            <person name="Yamashita H."/>
            <person name="Murakawa K."/>
            <person name="Fujimori K."/>
            <person name="Tanai H."/>
            <person name="Kimata M."/>
            <person name="Watanabe M."/>
            <person name="Hiraoka S."/>
            <person name="Chiba Y."/>
            <person name="Ishida S."/>
            <person name="Ono Y."/>
            <person name="Takiguchi S."/>
            <person name="Watanabe S."/>
            <person name="Yosida M."/>
            <person name="Hotuta T."/>
            <person name="Kusano J."/>
            <person name="Kanehori K."/>
            <person name="Takahashi-Fujii A."/>
            <person name="Hara H."/>
            <person name="Tanase T.-O."/>
            <person name="Nomura Y."/>
            <person name="Togiya S."/>
            <person name="Komai F."/>
            <person name="Hara R."/>
            <person name="Takeuchi K."/>
            <person name="Arita M."/>
            <person name="Imose N."/>
            <person name="Musashino K."/>
            <person name="Yuuki H."/>
            <person name="Oshima A."/>
            <person name="Sasaki N."/>
            <person name="Aotsuka S."/>
            <person name="Yoshikawa Y."/>
            <person name="Matsunawa H."/>
            <person name="Ichihara T."/>
            <person name="Shiohata N."/>
            <person name="Sano S."/>
            <person name="Moriya S."/>
            <person name="Momiyama H."/>
            <person name="Satoh N."/>
            <person name="Takami S."/>
            <person name="Terashima Y."/>
            <person name="Suzuki O."/>
            <person name="Nakagawa S."/>
            <person name="Senoh A."/>
            <person name="Mizoguchi H."/>
            <person name="Goto Y."/>
            <person name="Shimizu F."/>
            <person name="Wakebe H."/>
            <person name="Hishigaki H."/>
            <person name="Watanabe T."/>
            <person name="Sugiyama A."/>
            <person name="Takemoto M."/>
            <person name="Kawakami B."/>
            <person name="Yamazaki M."/>
            <person name="Watanabe K."/>
            <person name="Kumagai A."/>
            <person name="Itakura S."/>
            <person name="Fukuzumi Y."/>
            <person name="Fujimori Y."/>
            <person name="Komiyama M."/>
            <person name="Tashiro H."/>
            <person name="Tanigami A."/>
            <person name="Fujiwara T."/>
            <person name="Ono T."/>
            <person name="Yamada K."/>
            <person name="Fujii Y."/>
            <person name="Ozaki K."/>
            <person name="Hirao M."/>
            <person name="Ohmori Y."/>
            <person name="Kawabata A."/>
            <person name="Hikiji T."/>
            <person name="Kobatake N."/>
            <person name="Inagaki H."/>
            <person name="Ikema Y."/>
            <person name="Okamoto S."/>
            <person name="Okitani R."/>
            <person name="Kawakami T."/>
            <person name="Noguchi S."/>
            <person name="Itoh T."/>
            <person name="Shigeta K."/>
            <person name="Senba T."/>
            <person name="Matsumura K."/>
            <person name="Nakajima Y."/>
            <person name="Mizuno T."/>
            <person name="Morinaga M."/>
            <person name="Sasaki M."/>
            <person name="Togashi T."/>
            <person name="Oyama M."/>
            <person name="Hata H."/>
            <person name="Watanabe M."/>
            <person name="Komatsu T."/>
            <person name="Mizushima-Sugano J."/>
            <person name="Satoh T."/>
            <person name="Shirai Y."/>
            <person name="Takahashi Y."/>
            <person name="Nakagawa K."/>
            <person name="Okumura K."/>
            <person name="Nagase T."/>
            <person name="Nomura N."/>
            <person name="Kikuchi H."/>
            <person name="Masuho Y."/>
            <person name="Yamashita R."/>
            <person name="Nakai K."/>
            <person name="Yada T."/>
            <person name="Nakamura Y."/>
            <person name="Ohara O."/>
            <person name="Isogai T."/>
            <person name="Sugano S."/>
        </authorList>
    </citation>
    <scope>NUCLEOTIDE SEQUENCE [LARGE SCALE MRNA]</scope>
    <scope>VARIANT GLY-518</scope>
    <source>
        <tissue>Esophagus</tissue>
        <tissue>Liver</tissue>
    </source>
</reference>
<reference key="3">
    <citation type="journal article" date="2006" name="Nature">
        <title>The DNA sequence and biological annotation of human chromosome 1.</title>
        <authorList>
            <person name="Gregory S.G."/>
            <person name="Barlow K.F."/>
            <person name="McLay K.E."/>
            <person name="Kaul R."/>
            <person name="Swarbreck D."/>
            <person name="Dunham A."/>
            <person name="Scott C.E."/>
            <person name="Howe K.L."/>
            <person name="Woodfine K."/>
            <person name="Spencer C.C.A."/>
            <person name="Jones M.C."/>
            <person name="Gillson C."/>
            <person name="Searle S."/>
            <person name="Zhou Y."/>
            <person name="Kokocinski F."/>
            <person name="McDonald L."/>
            <person name="Evans R."/>
            <person name="Phillips K."/>
            <person name="Atkinson A."/>
            <person name="Cooper R."/>
            <person name="Jones C."/>
            <person name="Hall R.E."/>
            <person name="Andrews T.D."/>
            <person name="Lloyd C."/>
            <person name="Ainscough R."/>
            <person name="Almeida J.P."/>
            <person name="Ambrose K.D."/>
            <person name="Anderson F."/>
            <person name="Andrew R.W."/>
            <person name="Ashwell R.I.S."/>
            <person name="Aubin K."/>
            <person name="Babbage A.K."/>
            <person name="Bagguley C.L."/>
            <person name="Bailey J."/>
            <person name="Beasley H."/>
            <person name="Bethel G."/>
            <person name="Bird C.P."/>
            <person name="Bray-Allen S."/>
            <person name="Brown J.Y."/>
            <person name="Brown A.J."/>
            <person name="Buckley D."/>
            <person name="Burton J."/>
            <person name="Bye J."/>
            <person name="Carder C."/>
            <person name="Chapman J.C."/>
            <person name="Clark S.Y."/>
            <person name="Clarke G."/>
            <person name="Clee C."/>
            <person name="Cobley V."/>
            <person name="Collier R.E."/>
            <person name="Corby N."/>
            <person name="Coville G.J."/>
            <person name="Davies J."/>
            <person name="Deadman R."/>
            <person name="Dunn M."/>
            <person name="Earthrowl M."/>
            <person name="Ellington A.G."/>
            <person name="Errington H."/>
            <person name="Frankish A."/>
            <person name="Frankland J."/>
            <person name="French L."/>
            <person name="Garner P."/>
            <person name="Garnett J."/>
            <person name="Gay L."/>
            <person name="Ghori M.R.J."/>
            <person name="Gibson R."/>
            <person name="Gilby L.M."/>
            <person name="Gillett W."/>
            <person name="Glithero R.J."/>
            <person name="Grafham D.V."/>
            <person name="Griffiths C."/>
            <person name="Griffiths-Jones S."/>
            <person name="Grocock R."/>
            <person name="Hammond S."/>
            <person name="Harrison E.S.I."/>
            <person name="Hart E."/>
            <person name="Haugen E."/>
            <person name="Heath P.D."/>
            <person name="Holmes S."/>
            <person name="Holt K."/>
            <person name="Howden P.J."/>
            <person name="Hunt A.R."/>
            <person name="Hunt S.E."/>
            <person name="Hunter G."/>
            <person name="Isherwood J."/>
            <person name="James R."/>
            <person name="Johnson C."/>
            <person name="Johnson D."/>
            <person name="Joy A."/>
            <person name="Kay M."/>
            <person name="Kershaw J.K."/>
            <person name="Kibukawa M."/>
            <person name="Kimberley A.M."/>
            <person name="King A."/>
            <person name="Knights A.J."/>
            <person name="Lad H."/>
            <person name="Laird G."/>
            <person name="Lawlor S."/>
            <person name="Leongamornlert D.A."/>
            <person name="Lloyd D.M."/>
            <person name="Loveland J."/>
            <person name="Lovell J."/>
            <person name="Lush M.J."/>
            <person name="Lyne R."/>
            <person name="Martin S."/>
            <person name="Mashreghi-Mohammadi M."/>
            <person name="Matthews L."/>
            <person name="Matthews N.S.W."/>
            <person name="McLaren S."/>
            <person name="Milne S."/>
            <person name="Mistry S."/>
            <person name="Moore M.J.F."/>
            <person name="Nickerson T."/>
            <person name="O'Dell C.N."/>
            <person name="Oliver K."/>
            <person name="Palmeiri A."/>
            <person name="Palmer S.A."/>
            <person name="Parker A."/>
            <person name="Patel D."/>
            <person name="Pearce A.V."/>
            <person name="Peck A.I."/>
            <person name="Pelan S."/>
            <person name="Phelps K."/>
            <person name="Phillimore B.J."/>
            <person name="Plumb R."/>
            <person name="Rajan J."/>
            <person name="Raymond C."/>
            <person name="Rouse G."/>
            <person name="Saenphimmachak C."/>
            <person name="Sehra H.K."/>
            <person name="Sheridan E."/>
            <person name="Shownkeen R."/>
            <person name="Sims S."/>
            <person name="Skuce C.D."/>
            <person name="Smith M."/>
            <person name="Steward C."/>
            <person name="Subramanian S."/>
            <person name="Sycamore N."/>
            <person name="Tracey A."/>
            <person name="Tromans A."/>
            <person name="Van Helmond Z."/>
            <person name="Wall M."/>
            <person name="Wallis J.M."/>
            <person name="White S."/>
            <person name="Whitehead S.L."/>
            <person name="Wilkinson J.E."/>
            <person name="Willey D.L."/>
            <person name="Williams H."/>
            <person name="Wilming L."/>
            <person name="Wray P.W."/>
            <person name="Wu Z."/>
            <person name="Coulson A."/>
            <person name="Vaudin M."/>
            <person name="Sulston J.E."/>
            <person name="Durbin R.M."/>
            <person name="Hubbard T."/>
            <person name="Wooster R."/>
            <person name="Dunham I."/>
            <person name="Carter N.P."/>
            <person name="McVean G."/>
            <person name="Ross M.T."/>
            <person name="Harrow J."/>
            <person name="Olson M.V."/>
            <person name="Beck S."/>
            <person name="Rogers J."/>
            <person name="Bentley D.R."/>
        </authorList>
    </citation>
    <scope>NUCLEOTIDE SEQUENCE [LARGE SCALE GENOMIC DNA]</scope>
</reference>
<reference key="4">
    <citation type="submission" date="2005-07" db="EMBL/GenBank/DDBJ databases">
        <authorList>
            <person name="Mural R.J."/>
            <person name="Istrail S."/>
            <person name="Sutton G.G."/>
            <person name="Florea L."/>
            <person name="Halpern A.L."/>
            <person name="Mobarry C.M."/>
            <person name="Lippert R."/>
            <person name="Walenz B."/>
            <person name="Shatkay H."/>
            <person name="Dew I."/>
            <person name="Miller J.R."/>
            <person name="Flanigan M.J."/>
            <person name="Edwards N.J."/>
            <person name="Bolanos R."/>
            <person name="Fasulo D."/>
            <person name="Halldorsson B.V."/>
            <person name="Hannenhalli S."/>
            <person name="Turner R."/>
            <person name="Yooseph S."/>
            <person name="Lu F."/>
            <person name="Nusskern D.R."/>
            <person name="Shue B.C."/>
            <person name="Zheng X.H."/>
            <person name="Zhong F."/>
            <person name="Delcher A.L."/>
            <person name="Huson D.H."/>
            <person name="Kravitz S.A."/>
            <person name="Mouchard L."/>
            <person name="Reinert K."/>
            <person name="Remington K.A."/>
            <person name="Clark A.G."/>
            <person name="Waterman M.S."/>
            <person name="Eichler E.E."/>
            <person name="Adams M.D."/>
            <person name="Hunkapiller M.W."/>
            <person name="Myers E.W."/>
            <person name="Venter J.C."/>
        </authorList>
    </citation>
    <scope>NUCLEOTIDE SEQUENCE [LARGE SCALE GENOMIC DNA]</scope>
</reference>
<reference key="5">
    <citation type="journal article" date="2004" name="Genome Res.">
        <title>The status, quality, and expansion of the NIH full-length cDNA project: the Mammalian Gene Collection (MGC).</title>
        <authorList>
            <consortium name="The MGC Project Team"/>
        </authorList>
    </citation>
    <scope>NUCLEOTIDE SEQUENCE [LARGE SCALE MRNA]</scope>
    <source>
        <tissue>Adrenal cortex</tissue>
    </source>
</reference>
<reference key="6">
    <citation type="journal article" date="2001" name="J. Biol. Chem.">
        <title>Identification of the functional interleukin-22 (IL-22) receptor complex: the IL-10R2 chain (IL-10Rbeta) is a common chain of both the IL-10 and IL-22 (IL-10-related T cell-derived inducible factor, IL-TIF) receptor complexes.</title>
        <authorList>
            <person name="Kotenko S.V."/>
            <person name="Izotova L.S."/>
            <person name="Mirochnitchenko O.V."/>
            <person name="Esterova E."/>
            <person name="Dickensheets H."/>
            <person name="Donnelly R.P."/>
            <person name="Pestka S."/>
        </authorList>
    </citation>
    <scope>FUNCTION</scope>
    <scope>SUBUNIT</scope>
</reference>
<reference key="7">
    <citation type="journal article" date="2001" name="J. Immunol.">
        <title>STAT activation by IL-19, IL-20 and mda-7 through IL-20 receptor complexes of two types.</title>
        <authorList>
            <person name="Dumoutier L."/>
            <person name="Leemans C."/>
            <person name="Lejeune D."/>
            <person name="Kotenko S.V."/>
            <person name="Renauld J.-C."/>
        </authorList>
    </citation>
    <scope>FUNCTION</scope>
</reference>
<reference key="8">
    <citation type="journal article" date="2002" name="Int. Immunol.">
        <title>IL-22, in contrast to IL-10, does not induce Ig production, due to absence of a functional IL-22 receptor on activated human B cells.</title>
        <authorList>
            <person name="Lecart S."/>
            <person name="Morel F."/>
            <person name="Noraz N."/>
            <person name="Pene J."/>
            <person name="Garcia M."/>
            <person name="Boniface K."/>
            <person name="Lecron J.-C."/>
            <person name="Yssel H."/>
        </authorList>
    </citation>
    <scope>TISSUE SPECIFICITY</scope>
</reference>
<reference key="9">
    <citation type="journal article" date="2002" name="J. Biol. Chem.">
        <title>Interleukin 24 (MDA-7/MOB-5) signals through two heterodimeric receptors, IL-22R1/IL-20R2 and IL-20R1/IL-20R2.</title>
        <authorList>
            <person name="Wang M."/>
            <person name="Tan Z."/>
            <person name="Zhang R."/>
            <person name="Kotenko S.V."/>
            <person name="Liang P."/>
        </authorList>
    </citation>
    <scope>FUNCTION</scope>
</reference>
<reference key="10">
    <citation type="journal article" date="2002" name="J. Biol. Chem.">
        <title>Interleukins 19, 20, and 24 signal through two distinct receptor complexes. Differences in receptor-ligand interactions mediate unique biological functions.</title>
        <authorList>
            <person name="Parrish-Novak J."/>
            <person name="Xu W."/>
            <person name="Brender T."/>
            <person name="Yao L."/>
            <person name="Jones C."/>
            <person name="West J."/>
            <person name="Brandt C."/>
            <person name="Jelinek L."/>
            <person name="Madden K."/>
            <person name="McKernan P.A."/>
            <person name="Foster D.C."/>
            <person name="Jaspers S."/>
            <person name="Chandrasekher Y.A."/>
        </authorList>
    </citation>
    <scope>FUNCTION</scope>
    <scope>SUBCELLULAR LOCATION</scope>
</reference>
<reference key="11">
    <citation type="journal article" date="2003" name="Cancer Res.">
        <title>Melanoma differentiation-associated gene 7/interleukin (IL)-24 is a novel ligand that regulates angiogenesis via the IL-22 receptor.</title>
        <authorList>
            <person name="Ramesh R."/>
            <person name="Mhashilkar A.M."/>
            <person name="Tanaka F."/>
            <person name="Saito Y."/>
            <person name="Branch C.D."/>
            <person name="Sieger K."/>
            <person name="Mumm J.B."/>
            <person name="Stewart A.L."/>
            <person name="Boquoi A."/>
            <person name="Dumoutier L."/>
            <person name="Grimm E.A."/>
            <person name="Renauld J.-C."/>
            <person name="Kotenko S."/>
            <person name="Chada S."/>
        </authorList>
    </citation>
    <scope>FUNCTION</scope>
</reference>
<reference key="12">
    <citation type="journal article" date="2004" name="Immunity">
        <title>IL-22 increases the innate immunity of tissues.</title>
        <authorList>
            <person name="Wolk K."/>
            <person name="Kunz S."/>
            <person name="Witte E."/>
            <person name="Friedrich M."/>
            <person name="Asadullah K."/>
            <person name="Sabat R."/>
        </authorList>
    </citation>
    <scope>TISSUE SPECIFICITY</scope>
    <scope>INDUCTION</scope>
</reference>
<reference key="13">
    <citation type="journal article" date="2004" name="Int. Immunopharmacol.">
        <title>Temporal associations between interleukin 22 and the extracellular domains of IL-22R and IL-10R2.</title>
        <authorList>
            <person name="Li J."/>
            <person name="Tomkinson K.N."/>
            <person name="Tan X.-Y."/>
            <person name="Wu P."/>
            <person name="Yan G."/>
            <person name="Spaulding V."/>
            <person name="Deng B."/>
            <person name="Annis-Freeman B."/>
            <person name="Heveron K."/>
            <person name="Zollner R."/>
            <person name="De Zutter G."/>
            <person name="Wright J.F."/>
            <person name="Crawford T.K."/>
            <person name="Liu W."/>
            <person name="Jacobs K.A."/>
            <person name="Wolfman N.M."/>
            <person name="Ling V."/>
            <person name="Pittman D.D."/>
            <person name="Veldman G.M."/>
            <person name="Fouser L.A."/>
        </authorList>
    </citation>
    <scope>SUBUNIT</scope>
</reference>
<reference key="14">
    <citation type="journal article" date="2007" name="Am. J. Physiol.">
        <title>IL-22-mediated liver cell regeneration is abrogated by SOCS-1/3 overexpression in vitro.</title>
        <authorList>
            <person name="Brand S."/>
            <person name="Dambacher J."/>
            <person name="Beigel F."/>
            <person name="Zitzmann K."/>
            <person name="Heeg M.H.J."/>
            <person name="Weiss T.S."/>
            <person name="Pruefer T."/>
            <person name="Olszak T."/>
            <person name="Steib C.J."/>
            <person name="Storr M."/>
            <person name="Goeke B."/>
            <person name="Diepolder H."/>
            <person name="Bilzer M."/>
            <person name="Thasler W.E."/>
            <person name="Auernhammer C.J."/>
        </authorList>
    </citation>
    <scope>FUNCTION</scope>
</reference>
<reference key="15">
    <citation type="journal article" date="2007" name="Clin. Exp. Immunol.">
        <title>A role for T cell-derived interleukin 22 in psoriatic skin inflammation.</title>
        <authorList>
            <person name="Boniface K."/>
            <person name="Guignouard E."/>
            <person name="Pedretti N."/>
            <person name="Garcia M."/>
            <person name="Delwail A."/>
            <person name="Bernard F.-X."/>
            <person name="Nau F."/>
            <person name="Guillet G."/>
            <person name="Dagregorio G."/>
            <person name="Yssel H."/>
            <person name="Lecron J.-C."/>
            <person name="Morel F."/>
        </authorList>
    </citation>
    <scope>TISSUE SPECIFICITY</scope>
</reference>
<reference key="16">
    <citation type="journal article" date="2007" name="Laryngoscope">
        <title>Chronic rhinosinusitis with nasal polyps is associated with decreased expression of mucosal interleukin 22 receptor.</title>
        <authorList>
            <person name="Ramanathan M. Jr."/>
            <person name="Spannhake E.W."/>
            <person name="Lane A.P."/>
        </authorList>
    </citation>
    <scope>ASSOCIATION WITH CHRONIC RHINOSINUSITIS</scope>
</reference>
<reference key="17">
    <citation type="journal article" date="2007" name="Nat. Med.">
        <title>Human TH17 lymphocytes promote blood-brain barrier disruption and central nervous system inflammation.</title>
        <authorList>
            <person name="Kebir H."/>
            <person name="Kreymborg K."/>
            <person name="Ifergan I."/>
            <person name="Dodelet-Devillers A."/>
            <person name="Cayrol R."/>
            <person name="Bernard M."/>
            <person name="Giuliani F."/>
            <person name="Arbour N."/>
            <person name="Becher B."/>
            <person name="Prat A."/>
        </authorList>
    </citation>
    <scope>TISSUE SPECIFICITY</scope>
</reference>
<reference key="18">
    <citation type="journal article" date="2008" name="Cytokine">
        <title>The expression of IL-20 and IL-24 and their shared receptors are increased in rheumatoid arthritis and spondyloarthropathy.</title>
        <authorList>
            <person name="Kragstrup T.W."/>
            <person name="Otkjaer K."/>
            <person name="Holm C."/>
            <person name="Jorgensen A."/>
            <person name="Hokland M."/>
            <person name="Iversen L."/>
            <person name="Deleuran B."/>
        </authorList>
    </citation>
    <scope>TISSUE SPECIFICITY</scope>
</reference>
<reference key="19">
    <citation type="journal article" date="2015" name="J. Immunol. Res.">
        <title>The Human IL-22 Receptor Is Regulated through the Action of the Novel E3 Ligase Subunit FBXW12, Which Functions as an Epithelial Growth Suppressor.</title>
        <authorList>
            <person name="Franz J."/>
            <person name="Jerome J."/>
            <person name="Lear T."/>
            <person name="Gong Q."/>
            <person name="Weathington N.M."/>
        </authorList>
    </citation>
    <scope>INTERACTION WITH FBXW12</scope>
    <scope>UBIQUITINATION</scope>
</reference>
<reference key="20">
    <citation type="journal article" date="2008" name="FEBS Lett.">
        <title>Crystal structure of the IL-22/IL-22R1 complex and its implications for the IL-22 signaling mechanism.</title>
        <authorList>
            <person name="Bleicher L."/>
            <person name="de Moura P.R."/>
            <person name="Watanabe L."/>
            <person name="Colau D."/>
            <person name="Dumoutier L."/>
            <person name="Renauld J.-C."/>
            <person name="Polikarpov I."/>
        </authorList>
    </citation>
    <scope>X-RAY CRYSTALLOGRAPHY (1.9 ANGSTROMS) OF 18-228 IN COMPLEX WITH IL22</scope>
    <scope>MUTAGENESIS OF LYS-58 AND TYR-60</scope>
    <scope>DISULFIDE BONDS</scope>
</reference>
<keyword id="KW-0002">3D-structure</keyword>
<keyword id="KW-1003">Cell membrane</keyword>
<keyword id="KW-1015">Disulfide bond</keyword>
<keyword id="KW-0325">Glycoprotein</keyword>
<keyword id="KW-0472">Membrane</keyword>
<keyword id="KW-0597">Phosphoprotein</keyword>
<keyword id="KW-1267">Proteomics identification</keyword>
<keyword id="KW-0675">Receptor</keyword>
<keyword id="KW-1185">Reference proteome</keyword>
<keyword id="KW-0677">Repeat</keyword>
<keyword id="KW-0732">Signal</keyword>
<keyword id="KW-0812">Transmembrane</keyword>
<keyword id="KW-1133">Transmembrane helix</keyword>
<keyword id="KW-0832">Ubl conjugation</keyword>
<dbReference type="EMBL" id="AF286095">
    <property type="protein sequence ID" value="AAG22073.1"/>
    <property type="molecule type" value="mRNA"/>
</dbReference>
<dbReference type="EMBL" id="AK292204">
    <property type="protein sequence ID" value="BAF84893.1"/>
    <property type="molecule type" value="mRNA"/>
</dbReference>
<dbReference type="EMBL" id="AK313971">
    <property type="protein sequence ID" value="BAG36686.1"/>
    <property type="molecule type" value="mRNA"/>
</dbReference>
<dbReference type="EMBL" id="AL590683">
    <property type="status" value="NOT_ANNOTATED_CDS"/>
    <property type="molecule type" value="Genomic_DNA"/>
</dbReference>
<dbReference type="EMBL" id="AL591178">
    <property type="status" value="NOT_ANNOTATED_CDS"/>
    <property type="molecule type" value="Genomic_DNA"/>
</dbReference>
<dbReference type="EMBL" id="CH471134">
    <property type="protein sequence ID" value="EAW95111.1"/>
    <property type="molecule type" value="Genomic_DNA"/>
</dbReference>
<dbReference type="EMBL" id="BC029273">
    <property type="protein sequence ID" value="AAH29273.1"/>
    <property type="molecule type" value="mRNA"/>
</dbReference>
<dbReference type="CCDS" id="CCDS247.1"/>
<dbReference type="RefSeq" id="NP_067081.2">
    <property type="nucleotide sequence ID" value="NM_021258.3"/>
</dbReference>
<dbReference type="PDB" id="3DGC">
    <property type="method" value="X-ray"/>
    <property type="resolution" value="2.50 A"/>
    <property type="chains" value="R/S=17-226"/>
</dbReference>
<dbReference type="PDB" id="3DLQ">
    <property type="method" value="X-ray"/>
    <property type="resolution" value="1.90 A"/>
    <property type="chains" value="R=18-228"/>
</dbReference>
<dbReference type="PDB" id="6DF3">
    <property type="method" value="X-ray"/>
    <property type="resolution" value="2.15 A"/>
    <property type="chains" value="L=24-228"/>
</dbReference>
<dbReference type="PDBsum" id="3DGC"/>
<dbReference type="PDBsum" id="3DLQ"/>
<dbReference type="PDBsum" id="6DF3"/>
<dbReference type="SMR" id="Q8N6P7"/>
<dbReference type="BioGRID" id="121855">
    <property type="interactions" value="28"/>
</dbReference>
<dbReference type="ComplexPortal" id="CPX-10261">
    <property type="entry name" value="Interleukin-20 receptor-ligand type 2 complex"/>
</dbReference>
<dbReference type="ComplexPortal" id="CPX-10306">
    <property type="entry name" value="Interleukin-22 receptor-ligand complex"/>
</dbReference>
<dbReference type="ComplexPortal" id="CPX-10311">
    <property type="entry name" value="Interleukin-24 receptor-ligand complex, type 2"/>
</dbReference>
<dbReference type="CORUM" id="Q8N6P7"/>
<dbReference type="DIP" id="DIP-42031N"/>
<dbReference type="FunCoup" id="Q8N6P7">
    <property type="interactions" value="737"/>
</dbReference>
<dbReference type="IntAct" id="Q8N6P7">
    <property type="interactions" value="28"/>
</dbReference>
<dbReference type="MINT" id="Q8N6P7"/>
<dbReference type="STRING" id="9606.ENSP00000270800"/>
<dbReference type="ChEMBL" id="CHEMBL4804251"/>
<dbReference type="GuidetoPHARMACOLOGY" id="1731"/>
<dbReference type="GlyCosmos" id="Q8N6P7">
    <property type="glycosylation" value="2 sites, No reported glycans"/>
</dbReference>
<dbReference type="GlyGen" id="Q8N6P7">
    <property type="glycosylation" value="5 sites"/>
</dbReference>
<dbReference type="iPTMnet" id="Q8N6P7"/>
<dbReference type="PhosphoSitePlus" id="Q8N6P7"/>
<dbReference type="SwissPalm" id="Q8N6P7"/>
<dbReference type="BioMuta" id="IL22RA1"/>
<dbReference type="DMDM" id="74751067"/>
<dbReference type="jPOST" id="Q8N6P7"/>
<dbReference type="MassIVE" id="Q8N6P7"/>
<dbReference type="PaxDb" id="9606-ENSP00000270800"/>
<dbReference type="PeptideAtlas" id="Q8N6P7"/>
<dbReference type="ProteomicsDB" id="72209"/>
<dbReference type="Antibodypedia" id="15695">
    <property type="antibodies" value="461 antibodies from 36 providers"/>
</dbReference>
<dbReference type="DNASU" id="58985"/>
<dbReference type="Ensembl" id="ENST00000270800.2">
    <property type="protein sequence ID" value="ENSP00000270800.1"/>
    <property type="gene ID" value="ENSG00000142677.4"/>
</dbReference>
<dbReference type="GeneID" id="58985"/>
<dbReference type="KEGG" id="hsa:58985"/>
<dbReference type="MANE-Select" id="ENST00000270800.2">
    <property type="protein sequence ID" value="ENSP00000270800.1"/>
    <property type="RefSeq nucleotide sequence ID" value="NM_021258.4"/>
    <property type="RefSeq protein sequence ID" value="NP_067081.2"/>
</dbReference>
<dbReference type="UCSC" id="uc001biq.3">
    <property type="organism name" value="human"/>
</dbReference>
<dbReference type="AGR" id="HGNC:13700"/>
<dbReference type="CTD" id="58985"/>
<dbReference type="DisGeNET" id="58985"/>
<dbReference type="GeneCards" id="IL22RA1"/>
<dbReference type="HGNC" id="HGNC:13700">
    <property type="gene designation" value="IL22RA1"/>
</dbReference>
<dbReference type="HPA" id="ENSG00000142677">
    <property type="expression patterns" value="Tissue enriched (pancreas)"/>
</dbReference>
<dbReference type="MIM" id="605457">
    <property type="type" value="gene"/>
</dbReference>
<dbReference type="neXtProt" id="NX_Q8N6P7"/>
<dbReference type="OpenTargets" id="ENSG00000142677"/>
<dbReference type="PharmGKB" id="PA29823"/>
<dbReference type="VEuPathDB" id="HostDB:ENSG00000142677"/>
<dbReference type="eggNOG" id="ENOG502S4IS">
    <property type="taxonomic scope" value="Eukaryota"/>
</dbReference>
<dbReference type="GeneTree" id="ENSGT00940000161366"/>
<dbReference type="HOGENOM" id="CLU_033634_0_0_1"/>
<dbReference type="InParanoid" id="Q8N6P7"/>
<dbReference type="OMA" id="WLAKEGC"/>
<dbReference type="OrthoDB" id="9908819at2759"/>
<dbReference type="PAN-GO" id="Q8N6P7">
    <property type="GO annotations" value="3 GO annotations based on evolutionary models"/>
</dbReference>
<dbReference type="PhylomeDB" id="Q8N6P7"/>
<dbReference type="TreeFam" id="TF334107"/>
<dbReference type="PathwayCommons" id="Q8N6P7"/>
<dbReference type="Reactome" id="R-HSA-8854691">
    <property type="pathway name" value="Interleukin-20 family signaling"/>
</dbReference>
<dbReference type="SignaLink" id="Q8N6P7"/>
<dbReference type="SIGNOR" id="Q8N6P7"/>
<dbReference type="BioGRID-ORCS" id="58985">
    <property type="hits" value="8 hits in 1140 CRISPR screens"/>
</dbReference>
<dbReference type="ChiTaRS" id="IL22RA1">
    <property type="organism name" value="human"/>
</dbReference>
<dbReference type="EvolutionaryTrace" id="Q8N6P7"/>
<dbReference type="GenomeRNAi" id="58985"/>
<dbReference type="Pharos" id="Q8N6P7">
    <property type="development level" value="Tbio"/>
</dbReference>
<dbReference type="PRO" id="PR:Q8N6P7"/>
<dbReference type="Proteomes" id="UP000005640">
    <property type="component" value="Chromosome 1"/>
</dbReference>
<dbReference type="RNAct" id="Q8N6P7">
    <property type="molecule type" value="protein"/>
</dbReference>
<dbReference type="Bgee" id="ENSG00000142677">
    <property type="expression patterns" value="Expressed in body of pancreas and 113 other cell types or tissues"/>
</dbReference>
<dbReference type="GO" id="GO:0005886">
    <property type="term" value="C:plasma membrane"/>
    <property type="evidence" value="ECO:0000250"/>
    <property type="project" value="UniProt"/>
</dbReference>
<dbReference type="GO" id="GO:0004896">
    <property type="term" value="F:cytokine receptor activity"/>
    <property type="evidence" value="ECO:0000318"/>
    <property type="project" value="GO_Central"/>
</dbReference>
<dbReference type="GO" id="GO:0004904">
    <property type="term" value="F:interferon receptor activity"/>
    <property type="evidence" value="ECO:0000304"/>
    <property type="project" value="UniProtKB"/>
</dbReference>
<dbReference type="GO" id="GO:0042015">
    <property type="term" value="F:interleukin-20 binding"/>
    <property type="evidence" value="ECO:0007669"/>
    <property type="project" value="Ensembl"/>
</dbReference>
<dbReference type="GO" id="GO:0042018">
    <property type="term" value="F:interleukin-22 receptor activity"/>
    <property type="evidence" value="ECO:0000250"/>
    <property type="project" value="UniProt"/>
</dbReference>
<dbReference type="GO" id="GO:0019221">
    <property type="term" value="P:cytokine-mediated signaling pathway"/>
    <property type="evidence" value="ECO:0000318"/>
    <property type="project" value="GO_Central"/>
</dbReference>
<dbReference type="GO" id="GO:0050829">
    <property type="term" value="P:defense response to Gram-negative bacterium"/>
    <property type="evidence" value="ECO:0007669"/>
    <property type="project" value="Ensembl"/>
</dbReference>
<dbReference type="GO" id="GO:0050728">
    <property type="term" value="P:negative regulation of inflammatory response"/>
    <property type="evidence" value="ECO:0000250"/>
    <property type="project" value="UniProt"/>
</dbReference>
<dbReference type="CDD" id="cd00063">
    <property type="entry name" value="FN3"/>
    <property type="match status" value="1"/>
</dbReference>
<dbReference type="FunFam" id="2.60.40.10:FF:000348">
    <property type="entry name" value="Interleukin 20 receptor subunit alpha"/>
    <property type="match status" value="1"/>
</dbReference>
<dbReference type="FunFam" id="2.60.40.10:FF:001465">
    <property type="entry name" value="Interleukin-22 receptor subunit alpha-1"/>
    <property type="match status" value="1"/>
</dbReference>
<dbReference type="Gene3D" id="2.60.40.10">
    <property type="entry name" value="Immunoglobulins"/>
    <property type="match status" value="2"/>
</dbReference>
<dbReference type="InterPro" id="IPR003961">
    <property type="entry name" value="FN3_dom"/>
</dbReference>
<dbReference type="InterPro" id="IPR036116">
    <property type="entry name" value="FN3_sf"/>
</dbReference>
<dbReference type="InterPro" id="IPR013783">
    <property type="entry name" value="Ig-like_fold"/>
</dbReference>
<dbReference type="InterPro" id="IPR050650">
    <property type="entry name" value="Type-II_Cytokine-TF_Rcpt"/>
</dbReference>
<dbReference type="PANTHER" id="PTHR20859">
    <property type="entry name" value="INTERFERON/INTERLEUKIN RECEPTOR"/>
    <property type="match status" value="1"/>
</dbReference>
<dbReference type="PANTHER" id="PTHR20859:SF53">
    <property type="entry name" value="INTERLEUKIN-22 RECEPTOR SUBUNIT ALPHA-1"/>
    <property type="match status" value="1"/>
</dbReference>
<dbReference type="Pfam" id="PF01108">
    <property type="entry name" value="Tissue_fac"/>
    <property type="match status" value="1"/>
</dbReference>
<dbReference type="SUPFAM" id="SSF49265">
    <property type="entry name" value="Fibronectin type III"/>
    <property type="match status" value="1"/>
</dbReference>
<dbReference type="PROSITE" id="PS50853">
    <property type="entry name" value="FN3"/>
    <property type="match status" value="1"/>
</dbReference>
<organism>
    <name type="scientific">Homo sapiens</name>
    <name type="common">Human</name>
    <dbReference type="NCBI Taxonomy" id="9606"/>
    <lineage>
        <taxon>Eukaryota</taxon>
        <taxon>Metazoa</taxon>
        <taxon>Chordata</taxon>
        <taxon>Craniata</taxon>
        <taxon>Vertebrata</taxon>
        <taxon>Euteleostomi</taxon>
        <taxon>Mammalia</taxon>
        <taxon>Eutheria</taxon>
        <taxon>Euarchontoglires</taxon>
        <taxon>Primates</taxon>
        <taxon>Haplorrhini</taxon>
        <taxon>Catarrhini</taxon>
        <taxon>Hominidae</taxon>
        <taxon>Homo</taxon>
    </lineage>
</organism>
<sequence>MRTLLTILTVGSLAAHAPEDPSDLLQHVKFQSSNFENILTWDSGPEGTPDTVYSIEYKTYGERDWVAKKGCQRITRKSCNLTVETGNLTELYYARVTAVSAGGRSATKMTDRFSSLQHTTLKPPDVTCISKVRSIQMIVHPTPTPIRAGDGHRLTLEDIFHDLFYHLELQVNRTYQMHLGGKQREYEFFGLTPDTEFLGTIMICVPTWAKESAPYMCRVKTLPDRTWTYSFSGAFLFSMGFLVAVLCYLSYRYVTKPPAPPNSLNVQRVLTFQPLRFIQEHVLIPVFDLSGPSSLAQPVQYSQIRVSGPREPAGAPQRHSLSEITYLGQPDISILQPSNVPPPQILSPLSYAPNAAPEVGPPSYAPQVTPEAQFPFYAPQAISKVQPSSYAPQATPDSWPPSYGVCMEGSGKDSPTGTLSSPKHLRPKGQLQKEPPAGSCMLGGLSLQEVTSLAMEESQEAKSLHQPLGICTDRTSDPNVLHSGEEGTPQYLKGQLPLLSSVQIEGHPMSLPLQPPSRPCSPSDQGPSPWGLLESLVCPKDEAKSPAPETSDLEQPTELDSLFRGLALTVQWES</sequence>
<gene>
    <name type="primary">IL22RA1</name>
    <name type="synonym">IL22R</name>
</gene>